<organism>
    <name type="scientific">Rickettsia rickettsii (strain Sheila Smith)</name>
    <dbReference type="NCBI Taxonomy" id="392021"/>
    <lineage>
        <taxon>Bacteria</taxon>
        <taxon>Pseudomonadati</taxon>
        <taxon>Pseudomonadota</taxon>
        <taxon>Alphaproteobacteria</taxon>
        <taxon>Rickettsiales</taxon>
        <taxon>Rickettsiaceae</taxon>
        <taxon>Rickettsieae</taxon>
        <taxon>Rickettsia</taxon>
        <taxon>spotted fever group</taxon>
    </lineage>
</organism>
<gene>
    <name evidence="1" type="primary">rsmH</name>
    <name type="synonym">mraW</name>
    <name type="ordered locus">A1G_04755</name>
</gene>
<proteinExistence type="inferred from homology"/>
<dbReference type="EC" id="2.1.1.199" evidence="1"/>
<dbReference type="EMBL" id="CP000848">
    <property type="protein sequence ID" value="ABV76451.1"/>
    <property type="status" value="ALT_INIT"/>
    <property type="molecule type" value="Genomic_DNA"/>
</dbReference>
<dbReference type="RefSeq" id="WP_012262480.1">
    <property type="nucleotide sequence ID" value="NZ_CP121767.1"/>
</dbReference>
<dbReference type="SMR" id="A8GSS6"/>
<dbReference type="GeneID" id="79937550"/>
<dbReference type="KEGG" id="rri:A1G_04755"/>
<dbReference type="HOGENOM" id="CLU_038422_1_1_5"/>
<dbReference type="Proteomes" id="UP000006832">
    <property type="component" value="Chromosome"/>
</dbReference>
<dbReference type="GO" id="GO:0005737">
    <property type="term" value="C:cytoplasm"/>
    <property type="evidence" value="ECO:0007669"/>
    <property type="project" value="UniProtKB-SubCell"/>
</dbReference>
<dbReference type="GO" id="GO:0071424">
    <property type="term" value="F:rRNA (cytosine-N4-)-methyltransferase activity"/>
    <property type="evidence" value="ECO:0007669"/>
    <property type="project" value="UniProtKB-UniRule"/>
</dbReference>
<dbReference type="GO" id="GO:0070475">
    <property type="term" value="P:rRNA base methylation"/>
    <property type="evidence" value="ECO:0007669"/>
    <property type="project" value="UniProtKB-UniRule"/>
</dbReference>
<dbReference type="CDD" id="cd02440">
    <property type="entry name" value="AdoMet_MTases"/>
    <property type="match status" value="1"/>
</dbReference>
<dbReference type="FunFam" id="1.10.150.170:FF:000003">
    <property type="entry name" value="Ribosomal RNA small subunit methyltransferase H"/>
    <property type="match status" value="1"/>
</dbReference>
<dbReference type="Gene3D" id="1.10.150.170">
    <property type="entry name" value="Putative methyltransferase TM0872, insert domain"/>
    <property type="match status" value="1"/>
</dbReference>
<dbReference type="Gene3D" id="3.40.50.150">
    <property type="entry name" value="Vaccinia Virus protein VP39"/>
    <property type="match status" value="1"/>
</dbReference>
<dbReference type="HAMAP" id="MF_01007">
    <property type="entry name" value="16SrRNA_methyltr_H"/>
    <property type="match status" value="1"/>
</dbReference>
<dbReference type="InterPro" id="IPR002903">
    <property type="entry name" value="RsmH"/>
</dbReference>
<dbReference type="InterPro" id="IPR023397">
    <property type="entry name" value="SAM-dep_MeTrfase_MraW_recog"/>
</dbReference>
<dbReference type="InterPro" id="IPR029063">
    <property type="entry name" value="SAM-dependent_MTases_sf"/>
</dbReference>
<dbReference type="NCBIfam" id="TIGR00006">
    <property type="entry name" value="16S rRNA (cytosine(1402)-N(4))-methyltransferase RsmH"/>
    <property type="match status" value="1"/>
</dbReference>
<dbReference type="PANTHER" id="PTHR11265:SF0">
    <property type="entry name" value="12S RRNA N4-METHYLCYTIDINE METHYLTRANSFERASE"/>
    <property type="match status" value="1"/>
</dbReference>
<dbReference type="PANTHER" id="PTHR11265">
    <property type="entry name" value="S-ADENOSYL-METHYLTRANSFERASE MRAW"/>
    <property type="match status" value="1"/>
</dbReference>
<dbReference type="Pfam" id="PF01795">
    <property type="entry name" value="Methyltransf_5"/>
    <property type="match status" value="1"/>
</dbReference>
<dbReference type="PIRSF" id="PIRSF004486">
    <property type="entry name" value="MraW"/>
    <property type="match status" value="1"/>
</dbReference>
<dbReference type="SUPFAM" id="SSF81799">
    <property type="entry name" value="Putative methyltransferase TM0872, insert domain"/>
    <property type="match status" value="1"/>
</dbReference>
<dbReference type="SUPFAM" id="SSF53335">
    <property type="entry name" value="S-adenosyl-L-methionine-dependent methyltransferases"/>
    <property type="match status" value="1"/>
</dbReference>
<keyword id="KW-0963">Cytoplasm</keyword>
<keyword id="KW-0489">Methyltransferase</keyword>
<keyword id="KW-0698">rRNA processing</keyword>
<keyword id="KW-0949">S-adenosyl-L-methionine</keyword>
<keyword id="KW-0808">Transferase</keyword>
<reference key="1">
    <citation type="submission" date="2007-09" db="EMBL/GenBank/DDBJ databases">
        <title>Complete genome sequence of Rickettsia rickettsii.</title>
        <authorList>
            <person name="Madan A."/>
            <person name="Fahey J."/>
            <person name="Helton E."/>
            <person name="Ketteman M."/>
            <person name="Madan A."/>
            <person name="Rodrigues S."/>
            <person name="Sanchez A."/>
            <person name="Dasch G."/>
            <person name="Eremeeva M."/>
        </authorList>
    </citation>
    <scope>NUCLEOTIDE SEQUENCE [LARGE SCALE GENOMIC DNA]</scope>
    <source>
        <strain>Sheila Smith</strain>
    </source>
</reference>
<name>RSMH_RICRS</name>
<comment type="function">
    <text evidence="1">Specifically methylates the N4 position of cytidine in position 1402 (C1402) of 16S rRNA.</text>
</comment>
<comment type="catalytic activity">
    <reaction evidence="1">
        <text>cytidine(1402) in 16S rRNA + S-adenosyl-L-methionine = N(4)-methylcytidine(1402) in 16S rRNA + S-adenosyl-L-homocysteine + H(+)</text>
        <dbReference type="Rhea" id="RHEA:42928"/>
        <dbReference type="Rhea" id="RHEA-COMP:10286"/>
        <dbReference type="Rhea" id="RHEA-COMP:10287"/>
        <dbReference type="ChEBI" id="CHEBI:15378"/>
        <dbReference type="ChEBI" id="CHEBI:57856"/>
        <dbReference type="ChEBI" id="CHEBI:59789"/>
        <dbReference type="ChEBI" id="CHEBI:74506"/>
        <dbReference type="ChEBI" id="CHEBI:82748"/>
        <dbReference type="EC" id="2.1.1.199"/>
    </reaction>
</comment>
<comment type="subcellular location">
    <subcellularLocation>
        <location evidence="1">Cytoplasm</location>
    </subcellularLocation>
</comment>
<comment type="similarity">
    <text evidence="1">Belongs to the methyltransferase superfamily. RsmH family.</text>
</comment>
<comment type="sequence caution" evidence="2">
    <conflict type="erroneous initiation">
        <sequence resource="EMBL-CDS" id="ABV76451"/>
    </conflict>
</comment>
<feature type="chain" id="PRO_0000387087" description="Ribosomal RNA small subunit methyltransferase H">
    <location>
        <begin position="1"/>
        <end position="307"/>
    </location>
</feature>
<feature type="binding site" evidence="1">
    <location>
        <begin position="33"/>
        <end position="35"/>
    </location>
    <ligand>
        <name>S-adenosyl-L-methionine</name>
        <dbReference type="ChEBI" id="CHEBI:59789"/>
    </ligand>
</feature>
<feature type="binding site" evidence="1">
    <location>
        <position position="51"/>
    </location>
    <ligand>
        <name>S-adenosyl-L-methionine</name>
        <dbReference type="ChEBI" id="CHEBI:59789"/>
    </ligand>
</feature>
<feature type="binding site" evidence="1">
    <location>
        <position position="82"/>
    </location>
    <ligand>
        <name>S-adenosyl-L-methionine</name>
        <dbReference type="ChEBI" id="CHEBI:59789"/>
    </ligand>
</feature>
<feature type="binding site" evidence="1">
    <location>
        <position position="96"/>
    </location>
    <ligand>
        <name>S-adenosyl-L-methionine</name>
        <dbReference type="ChEBI" id="CHEBI:59789"/>
    </ligand>
</feature>
<feature type="binding site" evidence="1">
    <location>
        <position position="103"/>
    </location>
    <ligand>
        <name>S-adenosyl-L-methionine</name>
        <dbReference type="ChEBI" id="CHEBI:59789"/>
    </ligand>
</feature>
<accession>A8GSS6</accession>
<evidence type="ECO:0000255" key="1">
    <source>
        <dbReference type="HAMAP-Rule" id="MF_01007"/>
    </source>
</evidence>
<evidence type="ECO:0000305" key="2"/>
<protein>
    <recommendedName>
        <fullName evidence="1">Ribosomal RNA small subunit methyltransferase H</fullName>
        <ecNumber evidence="1">2.1.1.199</ecNumber>
    </recommendedName>
    <alternativeName>
        <fullName evidence="1">16S rRNA m(4)C1402 methyltransferase</fullName>
    </alternativeName>
    <alternativeName>
        <fullName evidence="1">rRNA (cytosine-N(4)-)-methyltransferase RsmH</fullName>
    </alternativeName>
</protein>
<sequence length="307" mass="34637">MIQSHVSVMLNEMLEALSPKAGESYLDCTFGAGGYSKAILESCNCYVTALDRDPNVIKRAEEIQQNYGERFDFVETNFADSFAKLKEKKFDGIVLDLGVSSMQLDIADRGFSFLHDGPLDMRMSGQGLSAEEFVNAAEEKELADVIYKYGDESFSRRIAKRIVEYRKTARIDSTGKLAEIVRSSIGFRKGKIDPATKTFQAIRIYVNDELGELEQFLVNVKNILKKDGRLVVVSFHSLEDRIVKNFFKENSEKPVVRSKYAKDDMTIDPNKWLKIITNKALAPSDKEVGLNIRARSAKLRAAKAIYE</sequence>